<sequence>MSKPGDYDAVRKDIIAQLKKPGYDDGSAGPVFVRLAWHSAGTYDLETDTGGSNGAGMRYEAEGGDPANAGLQHGRAFLEPVKEKHPWITYADLWTLAGVVAIEALGGPKVVWKPGRTDLVDDSKVPPRGRLPDATQGAEHLRAVFYRMGFNDQEIVALAGGHTLGRCHIDRSGFQGPWVNNPTRFSNQFFKLLLTLDWKPKTLPNGISQFVYVDPDAEEGDEPLMMLPTDIALKTDPAFRVWVDKYAADKDLFFDHFAKAFAKLMELGIKRDENDRVINADNVKGGYISAPKKSNHPTGPAKGAQGGCPVAASQGGCPRAKL</sequence>
<name>CCPR2_ASPFU</name>
<organism>
    <name type="scientific">Aspergillus fumigatus (strain ATCC MYA-4609 / CBS 101355 / FGSC A1100 / Af293)</name>
    <name type="common">Neosartorya fumigata</name>
    <dbReference type="NCBI Taxonomy" id="330879"/>
    <lineage>
        <taxon>Eukaryota</taxon>
        <taxon>Fungi</taxon>
        <taxon>Dikarya</taxon>
        <taxon>Ascomycota</taxon>
        <taxon>Pezizomycotina</taxon>
        <taxon>Eurotiomycetes</taxon>
        <taxon>Eurotiomycetidae</taxon>
        <taxon>Eurotiales</taxon>
        <taxon>Aspergillaceae</taxon>
        <taxon>Aspergillus</taxon>
        <taxon>Aspergillus subgen. Fumigati</taxon>
    </lineage>
</organism>
<protein>
    <recommendedName>
        <fullName>Putative heme-binding peroxidase</fullName>
        <ecNumber>1.11.1.-</ecNumber>
    </recommendedName>
</protein>
<accession>Q4WLG9</accession>
<evidence type="ECO:0000250" key="1"/>
<evidence type="ECO:0000255" key="2">
    <source>
        <dbReference type="PROSITE-ProRule" id="PRU00297"/>
    </source>
</evidence>
<evidence type="ECO:0000255" key="3">
    <source>
        <dbReference type="PROSITE-ProRule" id="PRU10012"/>
    </source>
</evidence>
<evidence type="ECO:0000256" key="4">
    <source>
        <dbReference type="SAM" id="MobiDB-lite"/>
    </source>
</evidence>
<evidence type="ECO:0000305" key="5"/>
<keyword id="KW-0349">Heme</keyword>
<keyword id="KW-0408">Iron</keyword>
<keyword id="KW-0479">Metal-binding</keyword>
<keyword id="KW-0560">Oxidoreductase</keyword>
<keyword id="KW-0575">Peroxidase</keyword>
<keyword id="KW-1185">Reference proteome</keyword>
<dbReference type="EC" id="1.11.1.-"/>
<dbReference type="EMBL" id="AAHF01000006">
    <property type="protein sequence ID" value="EAL89195.1"/>
    <property type="molecule type" value="Genomic_DNA"/>
</dbReference>
<dbReference type="RefSeq" id="XP_751233.1">
    <property type="nucleotide sequence ID" value="XM_746140.1"/>
</dbReference>
<dbReference type="SMR" id="Q4WLG9"/>
<dbReference type="STRING" id="330879.Q4WLG9"/>
<dbReference type="PeroxiBase" id="2339">
    <property type="entry name" value="AfumCcP01"/>
</dbReference>
<dbReference type="EnsemblFungi" id="EAL89195">
    <property type="protein sequence ID" value="EAL89195"/>
    <property type="gene ID" value="AFUA_6G13570"/>
</dbReference>
<dbReference type="GeneID" id="3508547"/>
<dbReference type="KEGG" id="afm:AFUA_6G13570"/>
<dbReference type="VEuPathDB" id="FungiDB:Afu6g13570"/>
<dbReference type="eggNOG" id="ENOG502QR1E">
    <property type="taxonomic scope" value="Eukaryota"/>
</dbReference>
<dbReference type="HOGENOM" id="CLU_036959_0_1_1"/>
<dbReference type="InParanoid" id="Q4WLG9"/>
<dbReference type="OMA" id="GAWVNNP"/>
<dbReference type="OrthoDB" id="2859658at2759"/>
<dbReference type="Proteomes" id="UP000002530">
    <property type="component" value="Chromosome 6"/>
</dbReference>
<dbReference type="GO" id="GO:0020037">
    <property type="term" value="F:heme binding"/>
    <property type="evidence" value="ECO:0007669"/>
    <property type="project" value="InterPro"/>
</dbReference>
<dbReference type="GO" id="GO:0046872">
    <property type="term" value="F:metal ion binding"/>
    <property type="evidence" value="ECO:0007669"/>
    <property type="project" value="UniProtKB-KW"/>
</dbReference>
<dbReference type="GO" id="GO:0004601">
    <property type="term" value="F:peroxidase activity"/>
    <property type="evidence" value="ECO:0000318"/>
    <property type="project" value="GO_Central"/>
</dbReference>
<dbReference type="GO" id="GO:0034599">
    <property type="term" value="P:cellular response to oxidative stress"/>
    <property type="evidence" value="ECO:0000318"/>
    <property type="project" value="GO_Central"/>
</dbReference>
<dbReference type="GO" id="GO:0042744">
    <property type="term" value="P:hydrogen peroxide catabolic process"/>
    <property type="evidence" value="ECO:0000318"/>
    <property type="project" value="GO_Central"/>
</dbReference>
<dbReference type="GO" id="GO:0000302">
    <property type="term" value="P:response to reactive oxygen species"/>
    <property type="evidence" value="ECO:0000318"/>
    <property type="project" value="GO_Central"/>
</dbReference>
<dbReference type="CDD" id="cd00691">
    <property type="entry name" value="ascorbate_peroxidase"/>
    <property type="match status" value="1"/>
</dbReference>
<dbReference type="FunFam" id="1.10.420.10:FF:000009">
    <property type="entry name" value="Ascorbate peroxidase"/>
    <property type="match status" value="1"/>
</dbReference>
<dbReference type="FunFam" id="1.10.520.10:FF:000005">
    <property type="entry name" value="Cytochrome c peroxidase"/>
    <property type="match status" value="1"/>
</dbReference>
<dbReference type="Gene3D" id="1.10.520.10">
    <property type="match status" value="1"/>
</dbReference>
<dbReference type="Gene3D" id="1.10.420.10">
    <property type="entry name" value="Peroxidase, domain 2"/>
    <property type="match status" value="1"/>
</dbReference>
<dbReference type="InterPro" id="IPR044831">
    <property type="entry name" value="Ccp1-like"/>
</dbReference>
<dbReference type="InterPro" id="IPR002016">
    <property type="entry name" value="Haem_peroxidase"/>
</dbReference>
<dbReference type="InterPro" id="IPR010255">
    <property type="entry name" value="Haem_peroxidase_sf"/>
</dbReference>
<dbReference type="InterPro" id="IPR002207">
    <property type="entry name" value="Peroxidase_I"/>
</dbReference>
<dbReference type="InterPro" id="IPR019794">
    <property type="entry name" value="Peroxidases_AS"/>
</dbReference>
<dbReference type="InterPro" id="IPR019793">
    <property type="entry name" value="Peroxidases_heam-ligand_BS"/>
</dbReference>
<dbReference type="PANTHER" id="PTHR31356:SF36">
    <property type="entry name" value="L-ASCORBATE PEROXIDASE 3"/>
    <property type="match status" value="1"/>
</dbReference>
<dbReference type="PANTHER" id="PTHR31356">
    <property type="entry name" value="THYLAKOID LUMENAL 29 KDA PROTEIN, CHLOROPLASTIC-RELATED"/>
    <property type="match status" value="1"/>
</dbReference>
<dbReference type="Pfam" id="PF00141">
    <property type="entry name" value="peroxidase"/>
    <property type="match status" value="1"/>
</dbReference>
<dbReference type="PRINTS" id="PR00459">
    <property type="entry name" value="ASPEROXIDASE"/>
</dbReference>
<dbReference type="PRINTS" id="PR00458">
    <property type="entry name" value="PEROXIDASE"/>
</dbReference>
<dbReference type="SUPFAM" id="SSF48113">
    <property type="entry name" value="Heme-dependent peroxidases"/>
    <property type="match status" value="1"/>
</dbReference>
<dbReference type="PROSITE" id="PS00435">
    <property type="entry name" value="PEROXIDASE_1"/>
    <property type="match status" value="1"/>
</dbReference>
<dbReference type="PROSITE" id="PS00436">
    <property type="entry name" value="PEROXIDASE_2"/>
    <property type="match status" value="1"/>
</dbReference>
<dbReference type="PROSITE" id="PS50873">
    <property type="entry name" value="PEROXIDASE_4"/>
    <property type="match status" value="1"/>
</dbReference>
<reference key="1">
    <citation type="journal article" date="2005" name="Nature">
        <title>Genomic sequence of the pathogenic and allergenic filamentous fungus Aspergillus fumigatus.</title>
        <authorList>
            <person name="Nierman W.C."/>
            <person name="Pain A."/>
            <person name="Anderson M.J."/>
            <person name="Wortman J.R."/>
            <person name="Kim H.S."/>
            <person name="Arroyo J."/>
            <person name="Berriman M."/>
            <person name="Abe K."/>
            <person name="Archer D.B."/>
            <person name="Bermejo C."/>
            <person name="Bennett J.W."/>
            <person name="Bowyer P."/>
            <person name="Chen D."/>
            <person name="Collins M."/>
            <person name="Coulsen R."/>
            <person name="Davies R."/>
            <person name="Dyer P.S."/>
            <person name="Farman M.L."/>
            <person name="Fedorova N."/>
            <person name="Fedorova N.D."/>
            <person name="Feldblyum T.V."/>
            <person name="Fischer R."/>
            <person name="Fosker N."/>
            <person name="Fraser A."/>
            <person name="Garcia J.L."/>
            <person name="Garcia M.J."/>
            <person name="Goble A."/>
            <person name="Goldman G.H."/>
            <person name="Gomi K."/>
            <person name="Griffith-Jones S."/>
            <person name="Gwilliam R."/>
            <person name="Haas B.J."/>
            <person name="Haas H."/>
            <person name="Harris D.E."/>
            <person name="Horiuchi H."/>
            <person name="Huang J."/>
            <person name="Humphray S."/>
            <person name="Jimenez J."/>
            <person name="Keller N."/>
            <person name="Khouri H."/>
            <person name="Kitamoto K."/>
            <person name="Kobayashi T."/>
            <person name="Konzack S."/>
            <person name="Kulkarni R."/>
            <person name="Kumagai T."/>
            <person name="Lafton A."/>
            <person name="Latge J.-P."/>
            <person name="Li W."/>
            <person name="Lord A."/>
            <person name="Lu C."/>
            <person name="Majoros W.H."/>
            <person name="May G.S."/>
            <person name="Miller B.L."/>
            <person name="Mohamoud Y."/>
            <person name="Molina M."/>
            <person name="Monod M."/>
            <person name="Mouyna I."/>
            <person name="Mulligan S."/>
            <person name="Murphy L.D."/>
            <person name="O'Neil S."/>
            <person name="Paulsen I."/>
            <person name="Penalva M.A."/>
            <person name="Pertea M."/>
            <person name="Price C."/>
            <person name="Pritchard B.L."/>
            <person name="Quail M.A."/>
            <person name="Rabbinowitsch E."/>
            <person name="Rawlins N."/>
            <person name="Rajandream M.A."/>
            <person name="Reichard U."/>
            <person name="Renauld H."/>
            <person name="Robson G.D."/>
            <person name="Rodriguez de Cordoba S."/>
            <person name="Rodriguez-Pena J.M."/>
            <person name="Ronning C.M."/>
            <person name="Rutter S."/>
            <person name="Salzberg S.L."/>
            <person name="Sanchez M."/>
            <person name="Sanchez-Ferrero J.C."/>
            <person name="Saunders D."/>
            <person name="Seeger K."/>
            <person name="Squares R."/>
            <person name="Squares S."/>
            <person name="Takeuchi M."/>
            <person name="Tekaia F."/>
            <person name="Turner G."/>
            <person name="Vazquez de Aldana C.R."/>
            <person name="Weidman J."/>
            <person name="White O."/>
            <person name="Woodward J.R."/>
            <person name="Yu J.-H."/>
            <person name="Fraser C.M."/>
            <person name="Galagan J.E."/>
            <person name="Asai K."/>
            <person name="Machida M."/>
            <person name="Hall N."/>
            <person name="Barrell B.G."/>
            <person name="Denning D.W."/>
        </authorList>
    </citation>
    <scope>NUCLEOTIDE SEQUENCE [LARGE SCALE GENOMIC DNA]</scope>
    <source>
        <strain>ATCC MYA-4609 / CBS 101355 / FGSC A1100 / Af293</strain>
    </source>
</reference>
<proteinExistence type="inferred from homology"/>
<feature type="chain" id="PRO_0000055583" description="Putative heme-binding peroxidase">
    <location>
        <begin position="1"/>
        <end position="322"/>
    </location>
</feature>
<feature type="region of interest" description="Disordered" evidence="4">
    <location>
        <begin position="288"/>
        <end position="322"/>
    </location>
</feature>
<feature type="active site" description="Proton acceptor" evidence="2 3">
    <location>
        <position position="38"/>
    </location>
</feature>
<feature type="active site" description="Tryptophan radical intermediate" evidence="1">
    <location>
        <position position="178"/>
    </location>
</feature>
<feature type="binding site" description="axial binding residue" evidence="2">
    <location>
        <position position="162"/>
    </location>
    <ligand>
        <name>heme b</name>
        <dbReference type="ChEBI" id="CHEBI:60344"/>
    </ligand>
    <ligandPart>
        <name>Fe</name>
        <dbReference type="ChEBI" id="CHEBI:18248"/>
    </ligandPart>
</feature>
<feature type="site" description="Transition state stabilizer" evidence="2">
    <location>
        <position position="34"/>
    </location>
</feature>
<comment type="function">
    <text evidence="1">Destroys radicals which are normally produced within the cells and which are toxic to biological systems.</text>
</comment>
<comment type="cofactor">
    <cofactor evidence="2">
        <name>heme b</name>
        <dbReference type="ChEBI" id="CHEBI:60344"/>
    </cofactor>
    <text evidence="2">Binds 1 heme b (iron(II)-protoporphyrin IX) group per subunit.</text>
</comment>
<comment type="similarity">
    <text evidence="5">Belongs to the peroxidase family. Cytochrome c peroxidase subfamily.</text>
</comment>
<gene>
    <name type="ORF">AFUA_6G13570</name>
</gene>